<dbReference type="EMBL" id="AE016825">
    <property type="protein sequence ID" value="AAQ61221.1"/>
    <property type="molecule type" value="Genomic_DNA"/>
</dbReference>
<dbReference type="RefSeq" id="WP_011137106.1">
    <property type="nucleotide sequence ID" value="NC_005085.1"/>
</dbReference>
<dbReference type="SMR" id="Q7NS67"/>
<dbReference type="STRING" id="243365.CV_3559"/>
<dbReference type="KEGG" id="cvi:CV_3559"/>
<dbReference type="eggNOG" id="COG3012">
    <property type="taxonomic scope" value="Bacteria"/>
</dbReference>
<dbReference type="HOGENOM" id="CLU_099590_2_0_4"/>
<dbReference type="OrthoDB" id="21421at2"/>
<dbReference type="Proteomes" id="UP000001424">
    <property type="component" value="Chromosome"/>
</dbReference>
<dbReference type="Gene3D" id="3.10.450.50">
    <property type="match status" value="1"/>
</dbReference>
<dbReference type="HAMAP" id="MF_00612">
    <property type="entry name" value="UPF0225"/>
    <property type="match status" value="1"/>
</dbReference>
<dbReference type="InterPro" id="IPR032710">
    <property type="entry name" value="NTF2-like_dom_sf"/>
</dbReference>
<dbReference type="InterPro" id="IPR023006">
    <property type="entry name" value="UPF0225"/>
</dbReference>
<dbReference type="InterPro" id="IPR048469">
    <property type="entry name" value="YchJ-like_M"/>
</dbReference>
<dbReference type="PANTHER" id="PTHR33747:SF1">
    <property type="entry name" value="ADENYLATE CYCLASE-ASSOCIATED CAP C-TERMINAL DOMAIN-CONTAINING PROTEIN"/>
    <property type="match status" value="1"/>
</dbReference>
<dbReference type="PANTHER" id="PTHR33747">
    <property type="entry name" value="UPF0225 PROTEIN SCO1677"/>
    <property type="match status" value="1"/>
</dbReference>
<dbReference type="Pfam" id="PF17775">
    <property type="entry name" value="YchJ_M-like"/>
    <property type="match status" value="1"/>
</dbReference>
<dbReference type="SUPFAM" id="SSF54427">
    <property type="entry name" value="NTF2-like"/>
    <property type="match status" value="1"/>
</dbReference>
<evidence type="ECO:0000255" key="1">
    <source>
        <dbReference type="HAMAP-Rule" id="MF_00612"/>
    </source>
</evidence>
<gene>
    <name type="ordered locus">CV_3559</name>
</gene>
<name>Y3559_CHRVO</name>
<reference key="1">
    <citation type="journal article" date="2003" name="Proc. Natl. Acad. Sci. U.S.A.">
        <title>The complete genome sequence of Chromobacterium violaceum reveals remarkable and exploitable bacterial adaptability.</title>
        <authorList>
            <person name="Vasconcelos A.T.R."/>
            <person name="de Almeida D.F."/>
            <person name="Hungria M."/>
            <person name="Guimaraes C.T."/>
            <person name="Antonio R.V."/>
            <person name="Almeida F.C."/>
            <person name="de Almeida L.G.P."/>
            <person name="de Almeida R."/>
            <person name="Alves-Gomes J.A."/>
            <person name="Andrade E.M."/>
            <person name="Araripe J."/>
            <person name="de Araujo M.F.F."/>
            <person name="Astolfi-Filho S."/>
            <person name="Azevedo V."/>
            <person name="Baptista A.J."/>
            <person name="Bataus L.A.M."/>
            <person name="Batista J.S."/>
            <person name="Belo A."/>
            <person name="van den Berg C."/>
            <person name="Bogo M."/>
            <person name="Bonatto S."/>
            <person name="Bordignon J."/>
            <person name="Brigido M.M."/>
            <person name="Brito C.A."/>
            <person name="Brocchi M."/>
            <person name="Burity H.A."/>
            <person name="Camargo A.A."/>
            <person name="Cardoso D.D.P."/>
            <person name="Carneiro N.P."/>
            <person name="Carraro D.M."/>
            <person name="Carvalho C.M.B."/>
            <person name="Cascardo J.C.M."/>
            <person name="Cavada B.S."/>
            <person name="Chueire L.M.O."/>
            <person name="Creczynski-Pasa T.B."/>
            <person name="Cunha-Junior N.C."/>
            <person name="Fagundes N."/>
            <person name="Falcao C.L."/>
            <person name="Fantinatti F."/>
            <person name="Farias I.P."/>
            <person name="Felipe M.S.S."/>
            <person name="Ferrari L.P."/>
            <person name="Ferro J.A."/>
            <person name="Ferro M.I.T."/>
            <person name="Franco G.R."/>
            <person name="Freitas N.S.A."/>
            <person name="Furlan L.R."/>
            <person name="Gazzinelli R.T."/>
            <person name="Gomes E.A."/>
            <person name="Goncalves P.R."/>
            <person name="Grangeiro T.B."/>
            <person name="Grattapaglia D."/>
            <person name="Grisard E.C."/>
            <person name="Hanna E.S."/>
            <person name="Jardim S.N."/>
            <person name="Laurino J."/>
            <person name="Leoi L.C.T."/>
            <person name="Lima L.F.A."/>
            <person name="Loureiro M.F."/>
            <person name="Lyra M.C.C.P."/>
            <person name="Madeira H.M.F."/>
            <person name="Manfio G.P."/>
            <person name="Maranhao A.Q."/>
            <person name="Martins W.S."/>
            <person name="di Mauro S.M.Z."/>
            <person name="de Medeiros S.R.B."/>
            <person name="Meissner R.V."/>
            <person name="Moreira M.A.M."/>
            <person name="Nascimento F.F."/>
            <person name="Nicolas M.F."/>
            <person name="Oliveira J.G."/>
            <person name="Oliveira S.C."/>
            <person name="Paixao R.F.C."/>
            <person name="Parente J.A."/>
            <person name="Pedrosa F.O."/>
            <person name="Pena S.D.J."/>
            <person name="Pereira J.O."/>
            <person name="Pereira M."/>
            <person name="Pinto L.S.R.C."/>
            <person name="Pinto L.S."/>
            <person name="Porto J.I.R."/>
            <person name="Potrich D.P."/>
            <person name="Ramalho-Neto C.E."/>
            <person name="Reis A.M.M."/>
            <person name="Rigo L.U."/>
            <person name="Rondinelli E."/>
            <person name="Santos E.B.P."/>
            <person name="Santos F.R."/>
            <person name="Schneider M.P.C."/>
            <person name="Seuanez H.N."/>
            <person name="Silva A.M.R."/>
            <person name="da Silva A.L.C."/>
            <person name="Silva D.W."/>
            <person name="Silva R."/>
            <person name="Simoes I.C."/>
            <person name="Simon D."/>
            <person name="Soares C.M.A."/>
            <person name="Soares R.B.A."/>
            <person name="Souza E.M."/>
            <person name="Souza K.R.L."/>
            <person name="Souza R.C."/>
            <person name="Steffens M.B.R."/>
            <person name="Steindel M."/>
            <person name="Teixeira S.R."/>
            <person name="Urmenyi T."/>
            <person name="Vettore A."/>
            <person name="Wassem R."/>
            <person name="Zaha A."/>
            <person name="Simpson A.J.G."/>
        </authorList>
    </citation>
    <scope>NUCLEOTIDE SEQUENCE [LARGE SCALE GENOMIC DNA]</scope>
    <source>
        <strain>ATCC 12472 / DSM 30191 / JCM 1249 / CCUG 213 / NBRC 12614 / NCIMB 9131 / NCTC 9757 / MK</strain>
    </source>
</reference>
<protein>
    <recommendedName>
        <fullName evidence="1">UPF0225 protein CV_3559</fullName>
    </recommendedName>
</protein>
<feature type="chain" id="PRO_0000071799" description="UPF0225 protein CV_3559">
    <location>
        <begin position="1"/>
        <end position="135"/>
    </location>
</feature>
<accession>Q7NS67</accession>
<proteinExistence type="inferred from homology"/>
<comment type="similarity">
    <text evidence="1">Belongs to the UPF0225 family.</text>
</comment>
<organism>
    <name type="scientific">Chromobacterium violaceum (strain ATCC 12472 / DSM 30191 / JCM 1249 / CCUG 213 / NBRC 12614 / NCIMB 9131 / NCTC 9757 / MK)</name>
    <dbReference type="NCBI Taxonomy" id="243365"/>
    <lineage>
        <taxon>Bacteria</taxon>
        <taxon>Pseudomonadati</taxon>
        <taxon>Pseudomonadota</taxon>
        <taxon>Betaproteobacteria</taxon>
        <taxon>Neisseriales</taxon>
        <taxon>Chromobacteriaceae</taxon>
        <taxon>Chromobacterium</taxon>
    </lineage>
</organism>
<keyword id="KW-1185">Reference proteome</keyword>
<sequence length="135" mass="14738">MKSKKQARAACPCGGGELAACCGRYLGPDASPAPTAQALMRSRYSAYALGLEDYLLATWHPSTRPEALHLDEDAGVVKWIGLEVKRCEAGSERDAEGVVEFVARCKVGGKAERMHETSRFLREDGRWYYVSGLVA</sequence>